<dbReference type="EC" id="2.1.1.33" evidence="2"/>
<dbReference type="EMBL" id="CP000133">
    <property type="protein sequence ID" value="ABC89191.1"/>
    <property type="molecule type" value="Genomic_DNA"/>
</dbReference>
<dbReference type="SMR" id="Q2KD95"/>
<dbReference type="KEGG" id="ret:RHE_CH00369"/>
<dbReference type="eggNOG" id="COG0220">
    <property type="taxonomic scope" value="Bacteria"/>
</dbReference>
<dbReference type="HOGENOM" id="CLU_050910_0_3_5"/>
<dbReference type="UniPathway" id="UPA00989"/>
<dbReference type="Proteomes" id="UP000001936">
    <property type="component" value="Chromosome"/>
</dbReference>
<dbReference type="GO" id="GO:0043527">
    <property type="term" value="C:tRNA methyltransferase complex"/>
    <property type="evidence" value="ECO:0007669"/>
    <property type="project" value="TreeGrafter"/>
</dbReference>
<dbReference type="GO" id="GO:0008176">
    <property type="term" value="F:tRNA (guanine(46)-N7)-methyltransferase activity"/>
    <property type="evidence" value="ECO:0007669"/>
    <property type="project" value="UniProtKB-UniRule"/>
</dbReference>
<dbReference type="CDD" id="cd02440">
    <property type="entry name" value="AdoMet_MTases"/>
    <property type="match status" value="1"/>
</dbReference>
<dbReference type="Gene3D" id="3.40.50.150">
    <property type="entry name" value="Vaccinia Virus protein VP39"/>
    <property type="match status" value="1"/>
</dbReference>
<dbReference type="HAMAP" id="MF_01057">
    <property type="entry name" value="tRNA_methyltr_TrmB"/>
    <property type="match status" value="1"/>
</dbReference>
<dbReference type="InterPro" id="IPR029063">
    <property type="entry name" value="SAM-dependent_MTases_sf"/>
</dbReference>
<dbReference type="InterPro" id="IPR003358">
    <property type="entry name" value="tRNA_(Gua-N-7)_MeTrfase_Trmb"/>
</dbReference>
<dbReference type="InterPro" id="IPR055361">
    <property type="entry name" value="tRNA_methyltr_TrmB_bact"/>
</dbReference>
<dbReference type="PANTHER" id="PTHR23417">
    <property type="entry name" value="3-DEOXY-D-MANNO-OCTULOSONIC-ACID TRANSFERASE/TRNA GUANINE-N 7 - -METHYLTRANSFERASE"/>
    <property type="match status" value="1"/>
</dbReference>
<dbReference type="PANTHER" id="PTHR23417:SF14">
    <property type="entry name" value="PENTACOTRIPEPTIDE-REPEAT REGION OF PRORP DOMAIN-CONTAINING PROTEIN"/>
    <property type="match status" value="1"/>
</dbReference>
<dbReference type="Pfam" id="PF02390">
    <property type="entry name" value="Methyltransf_4"/>
    <property type="match status" value="1"/>
</dbReference>
<dbReference type="SUPFAM" id="SSF53335">
    <property type="entry name" value="S-adenosyl-L-methionine-dependent methyltransferases"/>
    <property type="match status" value="1"/>
</dbReference>
<dbReference type="PROSITE" id="PS51625">
    <property type="entry name" value="SAM_MT_TRMB"/>
    <property type="match status" value="1"/>
</dbReference>
<organism>
    <name type="scientific">Rhizobium etli (strain ATCC 51251 / DSM 11541 / JCM 21823 / NBRC 15573 / CFN 42)</name>
    <dbReference type="NCBI Taxonomy" id="347834"/>
    <lineage>
        <taxon>Bacteria</taxon>
        <taxon>Pseudomonadati</taxon>
        <taxon>Pseudomonadota</taxon>
        <taxon>Alphaproteobacteria</taxon>
        <taxon>Hyphomicrobiales</taxon>
        <taxon>Rhizobiaceae</taxon>
        <taxon>Rhizobium/Agrobacterium group</taxon>
        <taxon>Rhizobium</taxon>
    </lineage>
</organism>
<proteinExistence type="inferred from homology"/>
<evidence type="ECO:0000250" key="1"/>
<evidence type="ECO:0000255" key="2">
    <source>
        <dbReference type="HAMAP-Rule" id="MF_01057"/>
    </source>
</evidence>
<protein>
    <recommendedName>
        <fullName evidence="2">tRNA (guanine-N(7)-)-methyltransferase</fullName>
        <ecNumber evidence="2">2.1.1.33</ecNumber>
    </recommendedName>
    <alternativeName>
        <fullName evidence="2">tRNA (guanine(46)-N(7))-methyltransferase</fullName>
    </alternativeName>
    <alternativeName>
        <fullName evidence="2">tRNA(m7G46)-methyltransferase</fullName>
    </alternativeName>
</protein>
<feature type="chain" id="PRO_0000288209" description="tRNA (guanine-N(7)-)-methyltransferase">
    <location>
        <begin position="1"/>
        <end position="230"/>
    </location>
</feature>
<feature type="active site" evidence="1">
    <location>
        <position position="135"/>
    </location>
</feature>
<feature type="binding site" evidence="2">
    <location>
        <position position="61"/>
    </location>
    <ligand>
        <name>S-adenosyl-L-methionine</name>
        <dbReference type="ChEBI" id="CHEBI:59789"/>
    </ligand>
</feature>
<feature type="binding site" evidence="2">
    <location>
        <position position="86"/>
    </location>
    <ligand>
        <name>S-adenosyl-L-methionine</name>
        <dbReference type="ChEBI" id="CHEBI:59789"/>
    </ligand>
</feature>
<feature type="binding site" evidence="2">
    <location>
        <position position="113"/>
    </location>
    <ligand>
        <name>S-adenosyl-L-methionine</name>
        <dbReference type="ChEBI" id="CHEBI:59789"/>
    </ligand>
</feature>
<feature type="binding site" evidence="2">
    <location>
        <position position="135"/>
    </location>
    <ligand>
        <name>S-adenosyl-L-methionine</name>
        <dbReference type="ChEBI" id="CHEBI:59789"/>
    </ligand>
</feature>
<feature type="binding site" evidence="2">
    <location>
        <position position="139"/>
    </location>
    <ligand>
        <name>substrate</name>
    </ligand>
</feature>
<feature type="binding site" evidence="2">
    <location>
        <position position="171"/>
    </location>
    <ligand>
        <name>substrate</name>
    </ligand>
</feature>
<feature type="binding site" evidence="2">
    <location>
        <begin position="209"/>
        <end position="212"/>
    </location>
    <ligand>
        <name>substrate</name>
    </ligand>
</feature>
<keyword id="KW-0489">Methyltransferase</keyword>
<keyword id="KW-1185">Reference proteome</keyword>
<keyword id="KW-0949">S-adenosyl-L-methionine</keyword>
<keyword id="KW-0808">Transferase</keyword>
<keyword id="KW-0819">tRNA processing</keyword>
<reference key="1">
    <citation type="journal article" date="2006" name="Proc. Natl. Acad. Sci. U.S.A.">
        <title>The partitioned Rhizobium etli genome: genetic and metabolic redundancy in seven interacting replicons.</title>
        <authorList>
            <person name="Gonzalez V."/>
            <person name="Santamaria R.I."/>
            <person name="Bustos P."/>
            <person name="Hernandez-Gonzalez I."/>
            <person name="Medrano-Soto A."/>
            <person name="Moreno-Hagelsieb G."/>
            <person name="Janga S.C."/>
            <person name="Ramirez M.A."/>
            <person name="Jimenez-Jacinto V."/>
            <person name="Collado-Vides J."/>
            <person name="Davila G."/>
        </authorList>
    </citation>
    <scope>NUCLEOTIDE SEQUENCE [LARGE SCALE GENOMIC DNA]</scope>
    <source>
        <strain>ATCC 51251 / DSM 11541 / JCM 21823 / NBRC 15573 / CFN 42</strain>
    </source>
</reference>
<gene>
    <name evidence="2" type="primary">trmB</name>
    <name type="ordered locus">RHE_CH00369</name>
</gene>
<accession>Q2KD95</accession>
<comment type="function">
    <text evidence="2">Catalyzes the formation of N(7)-methylguanine at position 46 (m7G46) in tRNA.</text>
</comment>
<comment type="catalytic activity">
    <reaction evidence="2">
        <text>guanosine(46) in tRNA + S-adenosyl-L-methionine = N(7)-methylguanosine(46) in tRNA + S-adenosyl-L-homocysteine</text>
        <dbReference type="Rhea" id="RHEA:42708"/>
        <dbReference type="Rhea" id="RHEA-COMP:10188"/>
        <dbReference type="Rhea" id="RHEA-COMP:10189"/>
        <dbReference type="ChEBI" id="CHEBI:57856"/>
        <dbReference type="ChEBI" id="CHEBI:59789"/>
        <dbReference type="ChEBI" id="CHEBI:74269"/>
        <dbReference type="ChEBI" id="CHEBI:74480"/>
        <dbReference type="EC" id="2.1.1.33"/>
    </reaction>
</comment>
<comment type="pathway">
    <text evidence="2">tRNA modification; N(7)-methylguanine-tRNA biosynthesis.</text>
</comment>
<comment type="similarity">
    <text evidence="2">Belongs to the class I-like SAM-binding methyltransferase superfamily. TrmB family.</text>
</comment>
<name>TRMB_RHIEC</name>
<sequence>MERRGRATEAFFGRRKGKALREQQAETLNSLLPAFLIDLSAAPPEPLTSLFPVPVTTLRLEIGFGGGEHLIHRALERPSTGFIGVEPFVNSMQKLLARAGQTGARNIRVYNDDATQLLDWLPDASLDQIDLLYPDPWPKRKHWKRRFVSKTNLDRFHRVLKPGGLFCFASDIDTYVNWTLLKCRDHSGFDWIADNAADWLTPYEGWPSTRYEAKARREGRSSAYLTFRKI</sequence>